<comment type="function">
    <text evidence="3 5">Proline-directed serine/threonine-protein kinase involved in a signal transduction pathway that is activated by changes in the osmolarity of the extracellular environment (By similarity). Controls osmotic regulation of transcription of target genes (By similarity). Involved in environmental stress response (By similarity). Via the downstream MSN2 transcription factor, may play roles in the regulation of growth, conidiation, trap development, fatty acid metabolism and secondary metabolites biosynthesis (PubMed:38331317).</text>
</comment>
<comment type="catalytic activity">
    <reaction evidence="1">
        <text>L-seryl-[protein] + ATP = O-phospho-L-seryl-[protein] + ADP + H(+)</text>
        <dbReference type="Rhea" id="RHEA:17989"/>
        <dbReference type="Rhea" id="RHEA-COMP:9863"/>
        <dbReference type="Rhea" id="RHEA-COMP:11604"/>
        <dbReference type="ChEBI" id="CHEBI:15378"/>
        <dbReference type="ChEBI" id="CHEBI:29999"/>
        <dbReference type="ChEBI" id="CHEBI:30616"/>
        <dbReference type="ChEBI" id="CHEBI:83421"/>
        <dbReference type="ChEBI" id="CHEBI:456216"/>
        <dbReference type="EC" id="2.7.11.24"/>
    </reaction>
    <physiologicalReaction direction="left-to-right" evidence="1">
        <dbReference type="Rhea" id="RHEA:17990"/>
    </physiologicalReaction>
</comment>
<comment type="catalytic activity">
    <reaction evidence="1">
        <text>L-threonyl-[protein] + ATP = O-phospho-L-threonyl-[protein] + ADP + H(+)</text>
        <dbReference type="Rhea" id="RHEA:46608"/>
        <dbReference type="Rhea" id="RHEA-COMP:11060"/>
        <dbReference type="Rhea" id="RHEA-COMP:11605"/>
        <dbReference type="ChEBI" id="CHEBI:15378"/>
        <dbReference type="ChEBI" id="CHEBI:30013"/>
        <dbReference type="ChEBI" id="CHEBI:30616"/>
        <dbReference type="ChEBI" id="CHEBI:61977"/>
        <dbReference type="ChEBI" id="CHEBI:456216"/>
        <dbReference type="EC" id="2.7.11.24"/>
    </reaction>
    <physiologicalReaction direction="left-to-right" evidence="1">
        <dbReference type="Rhea" id="RHEA:46609"/>
    </physiologicalReaction>
</comment>
<comment type="cofactor">
    <cofactor evidence="2">
        <name>Mg(2+)</name>
        <dbReference type="ChEBI" id="CHEBI:18420"/>
    </cofactor>
</comment>
<comment type="subcellular location">
    <subcellularLocation>
        <location evidence="3">Cytoplasm</location>
    </subcellularLocation>
    <subcellularLocation>
        <location evidence="3">Nucleus</location>
    </subcellularLocation>
    <text evidence="3">Translocates to the nucleus upon stress response.</text>
</comment>
<comment type="domain">
    <text evidence="7">The TXY motif contains the threonine and tyrosine residues whose phosphorylation activates the MAP kinases.</text>
</comment>
<comment type="similarity">
    <text evidence="7">Belongs to the protein kinase superfamily. Ser/Thr protein kinase family. MAP kinase subfamily. HOG1 sub-subfamily.</text>
</comment>
<dbReference type="EC" id="2.7.11.24" evidence="1"/>
<dbReference type="EMBL" id="ADOT01000191">
    <property type="protein sequence ID" value="EGX46451.1"/>
    <property type="molecule type" value="Genomic_DNA"/>
</dbReference>
<dbReference type="RefSeq" id="XP_011124806.1">
    <property type="nucleotide sequence ID" value="XM_011126504.1"/>
</dbReference>
<dbReference type="SMR" id="G1XJZ4"/>
<dbReference type="FunCoup" id="G1XJZ4">
    <property type="interactions" value="563"/>
</dbReference>
<dbReference type="STRING" id="756982.G1XJZ4"/>
<dbReference type="GeneID" id="22895894"/>
<dbReference type="eggNOG" id="KOG0660">
    <property type="taxonomic scope" value="Eukaryota"/>
</dbReference>
<dbReference type="HOGENOM" id="CLU_000288_181_1_1"/>
<dbReference type="InParanoid" id="G1XJZ4"/>
<dbReference type="OMA" id="NRYTDLN"/>
<dbReference type="OrthoDB" id="1969821at4890"/>
<dbReference type="Proteomes" id="UP000008784">
    <property type="component" value="Unassembled WGS sequence"/>
</dbReference>
<dbReference type="GO" id="GO:0005634">
    <property type="term" value="C:nucleus"/>
    <property type="evidence" value="ECO:0007669"/>
    <property type="project" value="UniProtKB-KW"/>
</dbReference>
<dbReference type="GO" id="GO:0005524">
    <property type="term" value="F:ATP binding"/>
    <property type="evidence" value="ECO:0007669"/>
    <property type="project" value="UniProtKB-UniRule"/>
</dbReference>
<dbReference type="GO" id="GO:0004707">
    <property type="term" value="F:MAP kinase activity"/>
    <property type="evidence" value="ECO:0007669"/>
    <property type="project" value="UniProtKB-EC"/>
</dbReference>
<dbReference type="GO" id="GO:0106310">
    <property type="term" value="F:protein serine kinase activity"/>
    <property type="evidence" value="ECO:0007669"/>
    <property type="project" value="RHEA"/>
</dbReference>
<dbReference type="GO" id="GO:0051403">
    <property type="term" value="P:stress-activated MAPK cascade"/>
    <property type="evidence" value="ECO:0007669"/>
    <property type="project" value="InterPro"/>
</dbReference>
<dbReference type="CDD" id="cd07856">
    <property type="entry name" value="STKc_Sty1_Hog1"/>
    <property type="match status" value="1"/>
</dbReference>
<dbReference type="FunFam" id="1.10.510.10:FF:000049">
    <property type="entry name" value="Mitogen-activated protein kinase"/>
    <property type="match status" value="1"/>
</dbReference>
<dbReference type="FunFam" id="3.30.200.20:FF:000050">
    <property type="entry name" value="Mitogen-activated protein kinase"/>
    <property type="match status" value="1"/>
</dbReference>
<dbReference type="Gene3D" id="3.30.200.20">
    <property type="entry name" value="Phosphorylase Kinase, domain 1"/>
    <property type="match status" value="1"/>
</dbReference>
<dbReference type="Gene3D" id="1.10.510.10">
    <property type="entry name" value="Transferase(Phosphotransferase) domain 1"/>
    <property type="match status" value="1"/>
</dbReference>
<dbReference type="InterPro" id="IPR011009">
    <property type="entry name" value="Kinase-like_dom_sf"/>
</dbReference>
<dbReference type="InterPro" id="IPR050117">
    <property type="entry name" value="MAP_kinase"/>
</dbReference>
<dbReference type="InterPro" id="IPR003527">
    <property type="entry name" value="MAP_kinase_CS"/>
</dbReference>
<dbReference type="InterPro" id="IPR008352">
    <property type="entry name" value="MAPK_p38-like"/>
</dbReference>
<dbReference type="InterPro" id="IPR038783">
    <property type="entry name" value="MAPK_Sty1/Hog1"/>
</dbReference>
<dbReference type="InterPro" id="IPR000719">
    <property type="entry name" value="Prot_kinase_dom"/>
</dbReference>
<dbReference type="InterPro" id="IPR017441">
    <property type="entry name" value="Protein_kinase_ATP_BS"/>
</dbReference>
<dbReference type="InterPro" id="IPR008271">
    <property type="entry name" value="Ser/Thr_kinase_AS"/>
</dbReference>
<dbReference type="PANTHER" id="PTHR24055">
    <property type="entry name" value="MITOGEN-ACTIVATED PROTEIN KINASE"/>
    <property type="match status" value="1"/>
</dbReference>
<dbReference type="Pfam" id="PF00069">
    <property type="entry name" value="Pkinase"/>
    <property type="match status" value="1"/>
</dbReference>
<dbReference type="PRINTS" id="PR01773">
    <property type="entry name" value="P38MAPKINASE"/>
</dbReference>
<dbReference type="SMART" id="SM00220">
    <property type="entry name" value="S_TKc"/>
    <property type="match status" value="1"/>
</dbReference>
<dbReference type="SUPFAM" id="SSF56112">
    <property type="entry name" value="Protein kinase-like (PK-like)"/>
    <property type="match status" value="1"/>
</dbReference>
<dbReference type="PROSITE" id="PS01351">
    <property type="entry name" value="MAPK"/>
    <property type="match status" value="1"/>
</dbReference>
<dbReference type="PROSITE" id="PS00107">
    <property type="entry name" value="PROTEIN_KINASE_ATP"/>
    <property type="match status" value="1"/>
</dbReference>
<dbReference type="PROSITE" id="PS50011">
    <property type="entry name" value="PROTEIN_KINASE_DOM"/>
    <property type="match status" value="1"/>
</dbReference>
<dbReference type="PROSITE" id="PS00108">
    <property type="entry name" value="PROTEIN_KINASE_ST"/>
    <property type="match status" value="1"/>
</dbReference>
<protein>
    <recommendedName>
        <fullName evidence="6">Mitogen-activated protein kinase HOG1</fullName>
        <shortName evidence="6">MAP kinase HOG1</shortName>
        <ecNumber evidence="1">2.7.11.24</ecNumber>
    </recommendedName>
</protein>
<organism>
    <name type="scientific">Arthrobotrys oligospora (strain ATCC 24927 / CBS 115.81 / DSM 1491)</name>
    <name type="common">Nematode-trapping fungus</name>
    <name type="synonym">Didymozoophaga oligospora</name>
    <dbReference type="NCBI Taxonomy" id="756982"/>
    <lineage>
        <taxon>Eukaryota</taxon>
        <taxon>Fungi</taxon>
        <taxon>Dikarya</taxon>
        <taxon>Ascomycota</taxon>
        <taxon>Pezizomycotina</taxon>
        <taxon>Orbiliomycetes</taxon>
        <taxon>Orbiliales</taxon>
        <taxon>Orbiliaceae</taxon>
        <taxon>Orbilia</taxon>
        <taxon>Orbilia oligospora</taxon>
    </lineage>
</organism>
<reference key="1">
    <citation type="journal article" date="2011" name="PLoS Pathog.">
        <title>Genomic and proteomic analyses of the fungus Arthrobotrys oligospora provide insights into nematode-trap formation.</title>
        <authorList>
            <person name="Yang J."/>
            <person name="Wang L."/>
            <person name="Ji X."/>
            <person name="Feng Y."/>
            <person name="Li X."/>
            <person name="Zou C."/>
            <person name="Xu J."/>
            <person name="Ren Y."/>
            <person name="Mi Q."/>
            <person name="Wu J."/>
            <person name="Liu S."/>
            <person name="Liu Y."/>
            <person name="Huang X."/>
            <person name="Wang H."/>
            <person name="Niu X."/>
            <person name="Li J."/>
            <person name="Liang L."/>
            <person name="Luo Y."/>
            <person name="Ji K."/>
            <person name="Zhou W."/>
            <person name="Yu Z."/>
            <person name="Li G."/>
            <person name="Liu Y."/>
            <person name="Li L."/>
            <person name="Qiao M."/>
            <person name="Feng L."/>
            <person name="Zhang K.-Q."/>
        </authorList>
    </citation>
    <scope>NUCLEOTIDE SEQUENCE [LARGE SCALE GENOMIC DNA]</scope>
    <source>
        <strain>ATCC 24927 / CBS 115.81 / DSM 1491</strain>
    </source>
</reference>
<reference key="2">
    <citation type="journal article" date="2025" name="J. Adv. Res.">
        <title>Identification of a transcription factor AoMsn2 of the Hog1 signaling pathway contributes to fungal growth, development and pathogenicity in Arthrobotrys oligospora.</title>
        <authorList>
            <person name="Liu Q."/>
            <person name="Jiang K."/>
            <person name="Duan S."/>
            <person name="Zhao N."/>
            <person name="Shen Y."/>
            <person name="Zhu L."/>
            <person name="Zhang K.Q."/>
            <person name="Yang J."/>
        </authorList>
    </citation>
    <scope>FUNCTION</scope>
</reference>
<evidence type="ECO:0000250" key="1">
    <source>
        <dbReference type="UniProtKB" id="P32485"/>
    </source>
</evidence>
<evidence type="ECO:0000250" key="2">
    <source>
        <dbReference type="UniProtKB" id="Q16539"/>
    </source>
</evidence>
<evidence type="ECO:0000250" key="3">
    <source>
        <dbReference type="UniProtKB" id="Q4WSF6"/>
    </source>
</evidence>
<evidence type="ECO:0000255" key="4">
    <source>
        <dbReference type="PROSITE-ProRule" id="PRU00159"/>
    </source>
</evidence>
<evidence type="ECO:0000269" key="5">
    <source>
    </source>
</evidence>
<evidence type="ECO:0000303" key="6">
    <source>
    </source>
</evidence>
<evidence type="ECO:0000305" key="7"/>
<gene>
    <name evidence="6" type="primary">HOG1</name>
    <name type="ORF">AOL_s00109g23</name>
</gene>
<feature type="chain" id="PRO_0000462287" description="Mitogen-activated protein kinase HOG1">
    <location>
        <begin position="1"/>
        <end position="350"/>
    </location>
</feature>
<feature type="domain" description="Protein kinase" evidence="4">
    <location>
        <begin position="20"/>
        <end position="299"/>
    </location>
</feature>
<feature type="short sequence motif" description="TXY" evidence="1">
    <location>
        <begin position="171"/>
        <end position="173"/>
    </location>
</feature>
<feature type="active site" description="Proton acceptor" evidence="4">
    <location>
        <position position="141"/>
    </location>
</feature>
<feature type="binding site" evidence="4">
    <location>
        <begin position="26"/>
        <end position="34"/>
    </location>
    <ligand>
        <name>ATP</name>
        <dbReference type="ChEBI" id="CHEBI:30616"/>
    </ligand>
</feature>
<feature type="binding site" evidence="4">
    <location>
        <position position="49"/>
    </location>
    <ligand>
        <name>ATP</name>
        <dbReference type="ChEBI" id="CHEBI:30616"/>
    </ligand>
</feature>
<sequence length="350" mass="40149">MAEFIRAQIFGTTFEITSRYTDLQPVGMGAFGLVCSAKDQLTGQPVAIKKIMKPFSTPVLSKRTYRELKLLKHLKHENVISLSDIFISPLEDIYFVTELLGTDLHRLLTSRPLEKQFIQYFLYQILRGLKYVHSAGVIHRDLKPSNILVNENCDLKICDFGLARIQDPQMTGYVSTRYYRAPEIMLTWQKYDVEVDIWSAGCIFAEMLEGKPLFPGKDHVNQFSIITELLGSPPEDVIHTICSENTLRFVQSLPKRERIPLSQKFKNADPAAVDLLERMLVFDPKKRISAAQALAHEYLAPYHDPSDEPVAAEKFDWSFNDADLPVDTWKIMMYSEILDYHNVDQNDTPL</sequence>
<keyword id="KW-0067">ATP-binding</keyword>
<keyword id="KW-0963">Cytoplasm</keyword>
<keyword id="KW-0418">Kinase</keyword>
<keyword id="KW-0460">Magnesium</keyword>
<keyword id="KW-0547">Nucleotide-binding</keyword>
<keyword id="KW-0539">Nucleus</keyword>
<keyword id="KW-1185">Reference proteome</keyword>
<keyword id="KW-0723">Serine/threonine-protein kinase</keyword>
<keyword id="KW-0808">Transferase</keyword>
<keyword id="KW-0843">Virulence</keyword>
<proteinExistence type="inferred from homology"/>
<accession>G1XJZ4</accession>
<name>HOG1_ARTOA</name>